<organism>
    <name type="scientific">Lactobacillus johnsonii (strain CNCM I-12250 / La1 / NCC 533)</name>
    <dbReference type="NCBI Taxonomy" id="257314"/>
    <lineage>
        <taxon>Bacteria</taxon>
        <taxon>Bacillati</taxon>
        <taxon>Bacillota</taxon>
        <taxon>Bacilli</taxon>
        <taxon>Lactobacillales</taxon>
        <taxon>Lactobacillaceae</taxon>
        <taxon>Lactobacillus</taxon>
    </lineage>
</organism>
<feature type="chain" id="PRO_0000238073" description="33 kDa chaperonin">
    <location>
        <begin position="1"/>
        <end position="291"/>
    </location>
</feature>
<feature type="disulfide bond" description="Redox-active" evidence="1">
    <location>
        <begin position="236"/>
        <end position="238"/>
    </location>
</feature>
<feature type="disulfide bond" description="Redox-active" evidence="1">
    <location>
        <begin position="269"/>
        <end position="272"/>
    </location>
</feature>
<keyword id="KW-0143">Chaperone</keyword>
<keyword id="KW-0963">Cytoplasm</keyword>
<keyword id="KW-1015">Disulfide bond</keyword>
<keyword id="KW-0676">Redox-active center</keyword>
<keyword id="KW-0862">Zinc</keyword>
<dbReference type="EMBL" id="AE017198">
    <property type="protein sequence ID" value="AAS08268.1"/>
    <property type="molecule type" value="Genomic_DNA"/>
</dbReference>
<dbReference type="RefSeq" id="WP_011161469.1">
    <property type="nucleotide sequence ID" value="NC_005362.1"/>
</dbReference>
<dbReference type="SMR" id="Q74L99"/>
<dbReference type="KEGG" id="ljo:LJ_0285"/>
<dbReference type="PATRIC" id="fig|257314.6.peg.297"/>
<dbReference type="eggNOG" id="COG1281">
    <property type="taxonomic scope" value="Bacteria"/>
</dbReference>
<dbReference type="HOGENOM" id="CLU_054493_1_0_9"/>
<dbReference type="Proteomes" id="UP000000581">
    <property type="component" value="Chromosome"/>
</dbReference>
<dbReference type="GO" id="GO:0005737">
    <property type="term" value="C:cytoplasm"/>
    <property type="evidence" value="ECO:0007669"/>
    <property type="project" value="UniProtKB-SubCell"/>
</dbReference>
<dbReference type="GO" id="GO:0044183">
    <property type="term" value="F:protein folding chaperone"/>
    <property type="evidence" value="ECO:0007669"/>
    <property type="project" value="TreeGrafter"/>
</dbReference>
<dbReference type="GO" id="GO:0051082">
    <property type="term" value="F:unfolded protein binding"/>
    <property type="evidence" value="ECO:0007669"/>
    <property type="project" value="UniProtKB-UniRule"/>
</dbReference>
<dbReference type="GO" id="GO:0042026">
    <property type="term" value="P:protein refolding"/>
    <property type="evidence" value="ECO:0007669"/>
    <property type="project" value="TreeGrafter"/>
</dbReference>
<dbReference type="CDD" id="cd00498">
    <property type="entry name" value="Hsp33"/>
    <property type="match status" value="1"/>
</dbReference>
<dbReference type="Gene3D" id="3.55.30.10">
    <property type="entry name" value="Hsp33 domain"/>
    <property type="match status" value="1"/>
</dbReference>
<dbReference type="Gene3D" id="3.90.1280.10">
    <property type="entry name" value="HSP33 redox switch-like"/>
    <property type="match status" value="1"/>
</dbReference>
<dbReference type="HAMAP" id="MF_00117">
    <property type="entry name" value="HslO"/>
    <property type="match status" value="1"/>
</dbReference>
<dbReference type="InterPro" id="IPR000397">
    <property type="entry name" value="Heat_shock_Hsp33"/>
</dbReference>
<dbReference type="InterPro" id="IPR016154">
    <property type="entry name" value="Heat_shock_Hsp33_C"/>
</dbReference>
<dbReference type="InterPro" id="IPR016153">
    <property type="entry name" value="Heat_shock_Hsp33_N"/>
</dbReference>
<dbReference type="NCBIfam" id="NF001033">
    <property type="entry name" value="PRK00114.1"/>
    <property type="match status" value="1"/>
</dbReference>
<dbReference type="PANTHER" id="PTHR30111">
    <property type="entry name" value="33 KDA CHAPERONIN"/>
    <property type="match status" value="1"/>
</dbReference>
<dbReference type="PANTHER" id="PTHR30111:SF1">
    <property type="entry name" value="33 KDA CHAPERONIN"/>
    <property type="match status" value="1"/>
</dbReference>
<dbReference type="Pfam" id="PF01430">
    <property type="entry name" value="HSP33"/>
    <property type="match status" value="1"/>
</dbReference>
<dbReference type="PIRSF" id="PIRSF005261">
    <property type="entry name" value="Heat_shock_Hsp33"/>
    <property type="match status" value="1"/>
</dbReference>
<dbReference type="SUPFAM" id="SSF64397">
    <property type="entry name" value="Hsp33 domain"/>
    <property type="match status" value="1"/>
</dbReference>
<dbReference type="SUPFAM" id="SSF118352">
    <property type="entry name" value="HSP33 redox switch-like"/>
    <property type="match status" value="1"/>
</dbReference>
<sequence length="291" mass="31761">MKDYLVKAIDKTKNLRLITVDAKDLVSEAQKRHDTWSASSAVLGRTLIGGLLLSAALLKDKDELTVRLLGNGPVGATIVTAKADLTIKGYIQNPHIALPPKKDGHIDVAKAVGKDWLEVTKDQGLKEPYTGQVPIVSGEIAEDFTYYLAKSEQIPSAVGLSVFVEPNNEIGAAGGFILQALPGATDEQLAEVEKRIKALPNLSTLFLDGMTPENLAERILGTDCKILAKEDVSFACDCSKEKYSQILATLKPAQLKEMIEKDHGAELVCRFCKEKYHFTEDELKDVLKKAN</sequence>
<gene>
    <name evidence="1" type="primary">hslO</name>
    <name type="ordered locus">LJ_0285</name>
</gene>
<proteinExistence type="inferred from homology"/>
<reference key="1">
    <citation type="journal article" date="2004" name="Proc. Natl. Acad. Sci. U.S.A.">
        <title>The genome sequence of the probiotic intestinal bacterium Lactobacillus johnsonii NCC 533.</title>
        <authorList>
            <person name="Pridmore R.D."/>
            <person name="Berger B."/>
            <person name="Desiere F."/>
            <person name="Vilanova D."/>
            <person name="Barretto C."/>
            <person name="Pittet A.-C."/>
            <person name="Zwahlen M.-C."/>
            <person name="Rouvet M."/>
            <person name="Altermann E."/>
            <person name="Barrangou R."/>
            <person name="Mollet B."/>
            <person name="Mercenier A."/>
            <person name="Klaenhammer T."/>
            <person name="Arigoni F."/>
            <person name="Schell M.A."/>
        </authorList>
    </citation>
    <scope>NUCLEOTIDE SEQUENCE [LARGE SCALE GENOMIC DNA]</scope>
    <source>
        <strain>CNCM I-1225 / La1 / NCC 533</strain>
    </source>
</reference>
<accession>Q74L99</accession>
<name>HSLO_LACJO</name>
<protein>
    <recommendedName>
        <fullName evidence="1">33 kDa chaperonin</fullName>
    </recommendedName>
    <alternativeName>
        <fullName evidence="1">Heat shock protein 33 homolog</fullName>
        <shortName evidence="1">HSP33</shortName>
    </alternativeName>
</protein>
<evidence type="ECO:0000255" key="1">
    <source>
        <dbReference type="HAMAP-Rule" id="MF_00117"/>
    </source>
</evidence>
<comment type="function">
    <text evidence="1">Redox regulated molecular chaperone. Protects both thermally unfolding and oxidatively damaged proteins from irreversible aggregation. Plays an important role in the bacterial defense system toward oxidative stress.</text>
</comment>
<comment type="subcellular location">
    <subcellularLocation>
        <location evidence="1">Cytoplasm</location>
    </subcellularLocation>
</comment>
<comment type="PTM">
    <text evidence="1">Under oxidizing conditions two disulfide bonds are formed involving the reactive cysteines. Under reducing conditions zinc is bound to the reactive cysteines and the protein is inactive.</text>
</comment>
<comment type="similarity">
    <text evidence="1">Belongs to the HSP33 family.</text>
</comment>